<feature type="chain" id="PRO_0000155810" description="Quinolinate synthase">
    <location>
        <begin position="1"/>
        <end position="300"/>
    </location>
</feature>
<feature type="binding site" evidence="1 5 7 8 9">
    <location>
        <position position="21"/>
    </location>
    <ligand>
        <name>iminosuccinate</name>
        <dbReference type="ChEBI" id="CHEBI:77875"/>
    </ligand>
</feature>
<feature type="binding site" evidence="1 5 7 8 9">
    <location>
        <position position="38"/>
    </location>
    <ligand>
        <name>iminosuccinate</name>
        <dbReference type="ChEBI" id="CHEBI:77875"/>
    </ligand>
</feature>
<feature type="binding site" evidence="1 3 4 5 11 12 13 14 15 16 17 18">
    <location>
        <position position="83"/>
    </location>
    <ligand>
        <name>[4Fe-4S] cluster</name>
        <dbReference type="ChEBI" id="CHEBI:49883"/>
    </ligand>
</feature>
<feature type="binding site" evidence="1 5 7 8 9">
    <location>
        <begin position="109"/>
        <end position="111"/>
    </location>
    <ligand>
        <name>iminosuccinate</name>
        <dbReference type="ChEBI" id="CHEBI:77875"/>
    </ligand>
</feature>
<feature type="binding site" evidence="1 5 7 9">
    <location>
        <position position="126"/>
    </location>
    <ligand>
        <name>iminosuccinate</name>
        <dbReference type="ChEBI" id="CHEBI:77875"/>
    </ligand>
</feature>
<feature type="binding site" evidence="1 3 4 5 11 12 13 14 15 16 17 18">
    <location>
        <position position="170"/>
    </location>
    <ligand>
        <name>[4Fe-4S] cluster</name>
        <dbReference type="ChEBI" id="CHEBI:49883"/>
    </ligand>
</feature>
<feature type="binding site" evidence="1 5 7 9">
    <location>
        <begin position="196"/>
        <end position="198"/>
    </location>
    <ligand>
        <name>iminosuccinate</name>
        <dbReference type="ChEBI" id="CHEBI:77875"/>
    </ligand>
</feature>
<feature type="binding site" evidence="1 5 7 9">
    <location>
        <position position="213"/>
    </location>
    <ligand>
        <name>iminosuccinate</name>
        <dbReference type="ChEBI" id="CHEBI:77875"/>
    </ligand>
</feature>
<feature type="binding site" evidence="1 3 4 5 11 12 13 14 15 16 17 18">
    <location>
        <position position="256"/>
    </location>
    <ligand>
        <name>[4Fe-4S] cluster</name>
        <dbReference type="ChEBI" id="CHEBI:49883"/>
    </ligand>
</feature>
<feature type="mutagenesis site" description="Loss of activity." evidence="3">
    <original>Y</original>
    <variation>F</variation>
    <location>
        <position position="23"/>
    </location>
</feature>
<feature type="mutagenesis site" description="Loss of activity." evidence="3">
    <original>Y</original>
    <variation>F</variation>
    <location>
        <position position="109"/>
    </location>
</feature>
<feature type="mutagenesis site" description="Loss of activity." evidence="3">
    <original>N</original>
    <variation>Q</variation>
    <location>
        <position position="111"/>
    </location>
</feature>
<feature type="mutagenesis site" description="Loss of activity." evidence="3">
    <original>E</original>
    <variation>Q</variation>
    <location>
        <position position="198"/>
    </location>
</feature>
<feature type="helix" evidence="23">
    <location>
        <begin position="3"/>
        <end position="13"/>
    </location>
</feature>
<feature type="strand" evidence="23">
    <location>
        <begin position="16"/>
        <end position="21"/>
    </location>
</feature>
<feature type="helix" evidence="23">
    <location>
        <begin position="26"/>
        <end position="29"/>
    </location>
</feature>
<feature type="strand" evidence="23">
    <location>
        <begin position="33"/>
        <end position="36"/>
    </location>
</feature>
<feature type="helix" evidence="23">
    <location>
        <begin position="38"/>
        <end position="44"/>
    </location>
</feature>
<feature type="helix" evidence="24">
    <location>
        <begin position="45"/>
        <end position="47"/>
    </location>
</feature>
<feature type="strand" evidence="23">
    <location>
        <begin position="50"/>
        <end position="57"/>
    </location>
</feature>
<feature type="helix" evidence="23">
    <location>
        <begin position="59"/>
        <end position="68"/>
    </location>
</feature>
<feature type="strand" evidence="23">
    <location>
        <begin position="72"/>
        <end position="75"/>
    </location>
</feature>
<feature type="helix" evidence="23">
    <location>
        <begin position="86"/>
        <end position="88"/>
    </location>
</feature>
<feature type="helix" evidence="23">
    <location>
        <begin position="91"/>
        <end position="100"/>
    </location>
</feature>
<feature type="strand" evidence="23">
    <location>
        <begin position="106"/>
        <end position="112"/>
    </location>
</feature>
<feature type="helix" evidence="23">
    <location>
        <begin position="114"/>
        <end position="117"/>
    </location>
</feature>
<feature type="strand" evidence="23">
    <location>
        <begin position="121"/>
        <end position="124"/>
    </location>
</feature>
<feature type="turn" evidence="23">
    <location>
        <begin position="126"/>
        <end position="128"/>
    </location>
</feature>
<feature type="helix" evidence="23">
    <location>
        <begin position="129"/>
        <end position="135"/>
    </location>
</feature>
<feature type="strand" evidence="23">
    <location>
        <begin position="139"/>
        <end position="145"/>
    </location>
</feature>
<feature type="helix" evidence="23">
    <location>
        <begin position="147"/>
        <end position="157"/>
    </location>
</feature>
<feature type="strand" evidence="23">
    <location>
        <begin position="160"/>
        <end position="167"/>
    </location>
</feature>
<feature type="helix" evidence="23">
    <location>
        <begin position="173"/>
        <end position="175"/>
    </location>
</feature>
<feature type="helix" evidence="23">
    <location>
        <begin position="178"/>
        <end position="187"/>
    </location>
</feature>
<feature type="strand" evidence="23">
    <location>
        <begin position="192"/>
        <end position="195"/>
    </location>
</feature>
<feature type="helix" evidence="23">
    <location>
        <begin position="201"/>
        <end position="204"/>
    </location>
</feature>
<feature type="strand" evidence="23">
    <location>
        <begin position="208"/>
        <end position="210"/>
    </location>
</feature>
<feature type="helix" evidence="23">
    <location>
        <begin position="213"/>
        <end position="219"/>
    </location>
</feature>
<feature type="helix" evidence="23">
    <location>
        <begin position="220"/>
        <end position="222"/>
    </location>
</feature>
<feature type="strand" evidence="23">
    <location>
        <begin position="224"/>
        <end position="230"/>
    </location>
</feature>
<feature type="helix" evidence="23">
    <location>
        <begin position="233"/>
        <end position="241"/>
    </location>
</feature>
<feature type="strand" evidence="23">
    <location>
        <begin position="245"/>
        <end position="250"/>
    </location>
</feature>
<feature type="helix" evidence="23">
    <location>
        <begin position="259"/>
        <end position="261"/>
    </location>
</feature>
<feature type="helix" evidence="23">
    <location>
        <begin position="264"/>
        <end position="273"/>
    </location>
</feature>
<feature type="helix" evidence="23">
    <location>
        <begin position="282"/>
        <end position="298"/>
    </location>
</feature>
<sequence>MDLVEEILRLKEERNAIILAHNYQLPEVQDIADFIGDSLELARRATRVDADVIVFAGVDFMAETAKILNPDKVVLIPSREATCAMANMLKVEHILEAKRKYPNAPVVLYVNSTAEAKAYADVTVTSANAVEVVKKLDSDVVIFGPDKNLAHYVAKMTGKKIIPVPSKGHCYVHQKFTLDDVERAKKLHPNAKLMIHPECIPEVQEKADIIASTGGMIKRACEWDEWVVFTEREMVYRLRKLYPQKKFYPAREDAFCIGMKAITLKNIYESLKDMKYKVEVPEEIARKARKAIERMLEMSK</sequence>
<evidence type="ECO:0000255" key="1">
    <source>
        <dbReference type="HAMAP-Rule" id="MF_00568"/>
    </source>
</evidence>
<evidence type="ECO:0000269" key="2">
    <source>
    </source>
</evidence>
<evidence type="ECO:0000269" key="3">
    <source>
    </source>
</evidence>
<evidence type="ECO:0000269" key="4">
    <source>
    </source>
</evidence>
<evidence type="ECO:0000269" key="5">
    <source>
    </source>
</evidence>
<evidence type="ECO:0000303" key="6">
    <source>
    </source>
</evidence>
<evidence type="ECO:0000305" key="7">
    <source>
    </source>
</evidence>
<evidence type="ECO:0000305" key="8">
    <source>
    </source>
</evidence>
<evidence type="ECO:0000305" key="9">
    <source>
    </source>
</evidence>
<evidence type="ECO:0007744" key="10">
    <source>
        <dbReference type="PDB" id="1WZU"/>
    </source>
</evidence>
<evidence type="ECO:0007744" key="11">
    <source>
        <dbReference type="PDB" id="4ZK6"/>
    </source>
</evidence>
<evidence type="ECO:0007744" key="12">
    <source>
        <dbReference type="PDB" id="5KTM"/>
    </source>
</evidence>
<evidence type="ECO:0007744" key="13">
    <source>
        <dbReference type="PDB" id="5KTN"/>
    </source>
</evidence>
<evidence type="ECO:0007744" key="14">
    <source>
        <dbReference type="PDB" id="5KTO"/>
    </source>
</evidence>
<evidence type="ECO:0007744" key="15">
    <source>
        <dbReference type="PDB" id="5KTP"/>
    </source>
</evidence>
<evidence type="ECO:0007744" key="16">
    <source>
        <dbReference type="PDB" id="5KTR"/>
    </source>
</evidence>
<evidence type="ECO:0007744" key="17">
    <source>
        <dbReference type="PDB" id="5KTS"/>
    </source>
</evidence>
<evidence type="ECO:0007744" key="18">
    <source>
        <dbReference type="PDB" id="5KTT"/>
    </source>
</evidence>
<evidence type="ECO:0007744" key="19">
    <source>
        <dbReference type="PDB" id="6NSO"/>
    </source>
</evidence>
<evidence type="ECO:0007744" key="20">
    <source>
        <dbReference type="PDB" id="6NSU"/>
    </source>
</evidence>
<evidence type="ECO:0007744" key="21">
    <source>
        <dbReference type="PDB" id="6OR8"/>
    </source>
</evidence>
<evidence type="ECO:0007744" key="22">
    <source>
        <dbReference type="PDB" id="6ORA"/>
    </source>
</evidence>
<evidence type="ECO:0007829" key="23">
    <source>
        <dbReference type="PDB" id="5KTN"/>
    </source>
</evidence>
<evidence type="ECO:0007829" key="24">
    <source>
        <dbReference type="PDB" id="5KTO"/>
    </source>
</evidence>
<comment type="function">
    <text evidence="1 2 3">Catalyzes the condensation of iminoaspartate with dihydroxyacetone phosphate to form quinolinate.</text>
</comment>
<comment type="catalytic activity">
    <reaction evidence="1 2 3">
        <text>iminosuccinate + dihydroxyacetone phosphate = quinolinate + phosphate + 2 H2O + H(+)</text>
        <dbReference type="Rhea" id="RHEA:25888"/>
        <dbReference type="ChEBI" id="CHEBI:15377"/>
        <dbReference type="ChEBI" id="CHEBI:15378"/>
        <dbReference type="ChEBI" id="CHEBI:29959"/>
        <dbReference type="ChEBI" id="CHEBI:43474"/>
        <dbReference type="ChEBI" id="CHEBI:57642"/>
        <dbReference type="ChEBI" id="CHEBI:77875"/>
        <dbReference type="EC" id="2.5.1.72"/>
    </reaction>
    <physiologicalReaction direction="left-to-right" evidence="1 2">
        <dbReference type="Rhea" id="RHEA:25889"/>
    </physiologicalReaction>
</comment>
<comment type="cofactor">
    <cofactor evidence="1 3 4 5">
        <name>[4Fe-4S] cluster</name>
        <dbReference type="ChEBI" id="CHEBI:49883"/>
    </cofactor>
    <text evidence="1 3 4 5">Binds 1 [4Fe-4S] cluster per subunit.</text>
</comment>
<comment type="biophysicochemical properties">
    <kinetics>
        <KM evidence="3">0.24 mM for dihydroxyacetone phosphate</KM>
    </kinetics>
</comment>
<comment type="pathway">
    <text evidence="1 7">Cofactor biosynthesis; NAD(+) biosynthesis; quinolinate from iminoaspartate: step 1/1.</text>
</comment>
<comment type="subunit">
    <text evidence="2 3">Monomer (PubMed:15937336). Homodimer (PubMed:27224840).</text>
</comment>
<comment type="subcellular location">
    <subcellularLocation>
        <location evidence="1">Cytoplasm</location>
    </subcellularLocation>
</comment>
<comment type="domain">
    <text evidence="4">Contains three domains displaying pseudo-three-fold symmetry that each contribute a cysteine residue for ligation to a centrally located [4Fe-4S] cluster.</text>
</comment>
<comment type="similarity">
    <text evidence="1">Belongs to the quinolinate synthase family. Type 2 subfamily.</text>
</comment>
<dbReference type="EC" id="2.5.1.72" evidence="1 2 3"/>
<dbReference type="EMBL" id="BA000001">
    <property type="protein sequence ID" value="BAA29081.1"/>
    <property type="molecule type" value="Genomic_DNA"/>
</dbReference>
<dbReference type="PIR" id="B71219">
    <property type="entry name" value="B71219"/>
</dbReference>
<dbReference type="RefSeq" id="WP_010884133.1">
    <property type="nucleotide sequence ID" value="NC_000961.1"/>
</dbReference>
<dbReference type="PDB" id="1WZU">
    <property type="method" value="X-ray"/>
    <property type="resolution" value="2.00 A"/>
    <property type="chains" value="A=1-300"/>
</dbReference>
<dbReference type="PDB" id="4ZK6">
    <property type="method" value="X-ray"/>
    <property type="resolution" value="1.90 A"/>
    <property type="chains" value="A/B=1-300"/>
</dbReference>
<dbReference type="PDB" id="5KTM">
    <property type="method" value="X-ray"/>
    <property type="resolution" value="1.44 A"/>
    <property type="chains" value="A=1-300"/>
</dbReference>
<dbReference type="PDB" id="5KTN">
    <property type="method" value="X-ray"/>
    <property type="resolution" value="1.34 A"/>
    <property type="chains" value="A=1-300"/>
</dbReference>
<dbReference type="PDB" id="5KTO">
    <property type="method" value="X-ray"/>
    <property type="resolution" value="1.44 A"/>
    <property type="chains" value="A=1-300"/>
</dbReference>
<dbReference type="PDB" id="5KTP">
    <property type="method" value="X-ray"/>
    <property type="resolution" value="1.54 A"/>
    <property type="chains" value="A=1-300"/>
</dbReference>
<dbReference type="PDB" id="5KTR">
    <property type="method" value="X-ray"/>
    <property type="resolution" value="1.34 A"/>
    <property type="chains" value="A=1-300"/>
</dbReference>
<dbReference type="PDB" id="5KTS">
    <property type="method" value="X-ray"/>
    <property type="resolution" value="1.34 A"/>
    <property type="chains" value="A=1-300"/>
</dbReference>
<dbReference type="PDB" id="5KTT">
    <property type="method" value="X-ray"/>
    <property type="resolution" value="1.50 A"/>
    <property type="chains" value="A=1-300"/>
</dbReference>
<dbReference type="PDB" id="6NSO">
    <property type="method" value="X-ray"/>
    <property type="resolution" value="1.60 A"/>
    <property type="chains" value="A=1-300"/>
</dbReference>
<dbReference type="PDB" id="6NSU">
    <property type="method" value="X-ray"/>
    <property type="resolution" value="2.15 A"/>
    <property type="chains" value="A=1-300"/>
</dbReference>
<dbReference type="PDB" id="6OR8">
    <property type="method" value="X-ray"/>
    <property type="resolution" value="1.65 A"/>
    <property type="chains" value="A=1-300"/>
</dbReference>
<dbReference type="PDB" id="6ORA">
    <property type="method" value="X-ray"/>
    <property type="resolution" value="2.20 A"/>
    <property type="chains" value="A/B=1-300"/>
</dbReference>
<dbReference type="PDBsum" id="1WZU"/>
<dbReference type="PDBsum" id="4ZK6"/>
<dbReference type="PDBsum" id="5KTM"/>
<dbReference type="PDBsum" id="5KTN"/>
<dbReference type="PDBsum" id="5KTO"/>
<dbReference type="PDBsum" id="5KTP"/>
<dbReference type="PDBsum" id="5KTR"/>
<dbReference type="PDBsum" id="5KTS"/>
<dbReference type="PDBsum" id="5KTT"/>
<dbReference type="PDBsum" id="6NSO"/>
<dbReference type="PDBsum" id="6NSU"/>
<dbReference type="PDBsum" id="6OR8"/>
<dbReference type="PDBsum" id="6ORA"/>
<dbReference type="SMR" id="O57767"/>
<dbReference type="STRING" id="70601.gene:9376920"/>
<dbReference type="EnsemblBacteria" id="BAA29081">
    <property type="protein sequence ID" value="BAA29081"/>
    <property type="gene ID" value="BAA29081"/>
</dbReference>
<dbReference type="GeneID" id="1443915"/>
<dbReference type="KEGG" id="pho:PH0013"/>
<dbReference type="eggNOG" id="arCOG04459">
    <property type="taxonomic scope" value="Archaea"/>
</dbReference>
<dbReference type="OrthoDB" id="5931at2157"/>
<dbReference type="BRENDA" id="2.5.1.72">
    <property type="organism ID" value="5244"/>
</dbReference>
<dbReference type="UniPathway" id="UPA00253">
    <property type="reaction ID" value="UER00327"/>
</dbReference>
<dbReference type="EvolutionaryTrace" id="O57767"/>
<dbReference type="Proteomes" id="UP000000752">
    <property type="component" value="Chromosome"/>
</dbReference>
<dbReference type="GO" id="GO:0005737">
    <property type="term" value="C:cytoplasm"/>
    <property type="evidence" value="ECO:0007669"/>
    <property type="project" value="UniProtKB-SubCell"/>
</dbReference>
<dbReference type="GO" id="GO:0051539">
    <property type="term" value="F:4 iron, 4 sulfur cluster binding"/>
    <property type="evidence" value="ECO:0007669"/>
    <property type="project" value="UniProtKB-KW"/>
</dbReference>
<dbReference type="GO" id="GO:0046872">
    <property type="term" value="F:metal ion binding"/>
    <property type="evidence" value="ECO:0007669"/>
    <property type="project" value="UniProtKB-KW"/>
</dbReference>
<dbReference type="GO" id="GO:0008987">
    <property type="term" value="F:quinolinate synthetase A activity"/>
    <property type="evidence" value="ECO:0007669"/>
    <property type="project" value="UniProtKB-UniRule"/>
</dbReference>
<dbReference type="GO" id="GO:0034628">
    <property type="term" value="P:'de novo' NAD biosynthetic process from L-aspartate"/>
    <property type="evidence" value="ECO:0007669"/>
    <property type="project" value="TreeGrafter"/>
</dbReference>
<dbReference type="Gene3D" id="3.40.50.10800">
    <property type="entry name" value="NadA-like"/>
    <property type="match status" value="3"/>
</dbReference>
<dbReference type="HAMAP" id="MF_00568">
    <property type="entry name" value="NadA_type2"/>
    <property type="match status" value="1"/>
</dbReference>
<dbReference type="InterPro" id="IPR003473">
    <property type="entry name" value="NadA"/>
</dbReference>
<dbReference type="InterPro" id="IPR036094">
    <property type="entry name" value="NadA_sf"/>
</dbReference>
<dbReference type="InterPro" id="IPR023066">
    <property type="entry name" value="Quinolinate_synth_type2"/>
</dbReference>
<dbReference type="NCBIfam" id="TIGR00550">
    <property type="entry name" value="nadA"/>
    <property type="match status" value="1"/>
</dbReference>
<dbReference type="NCBIfam" id="NF006878">
    <property type="entry name" value="PRK09375.1-2"/>
    <property type="match status" value="1"/>
</dbReference>
<dbReference type="PANTHER" id="PTHR30573:SF0">
    <property type="entry name" value="QUINOLINATE SYNTHASE, CHLOROPLASTIC"/>
    <property type="match status" value="1"/>
</dbReference>
<dbReference type="PANTHER" id="PTHR30573">
    <property type="entry name" value="QUINOLINATE SYNTHETASE A"/>
    <property type="match status" value="1"/>
</dbReference>
<dbReference type="Pfam" id="PF02445">
    <property type="entry name" value="NadA"/>
    <property type="match status" value="1"/>
</dbReference>
<dbReference type="SUPFAM" id="SSF142754">
    <property type="entry name" value="NadA-like"/>
    <property type="match status" value="1"/>
</dbReference>
<name>NADA_PYRHO</name>
<organism>
    <name type="scientific">Pyrococcus horikoshii (strain ATCC 700860 / DSM 12428 / JCM 9974 / NBRC 100139 / OT-3)</name>
    <dbReference type="NCBI Taxonomy" id="70601"/>
    <lineage>
        <taxon>Archaea</taxon>
        <taxon>Methanobacteriati</taxon>
        <taxon>Methanobacteriota</taxon>
        <taxon>Thermococci</taxon>
        <taxon>Thermococcales</taxon>
        <taxon>Thermococcaceae</taxon>
        <taxon>Pyrococcus</taxon>
    </lineage>
</organism>
<reference key="1">
    <citation type="journal article" date="1998" name="DNA Res.">
        <title>Complete sequence and gene organization of the genome of a hyper-thermophilic archaebacterium, Pyrococcus horikoshii OT3.</title>
        <authorList>
            <person name="Kawarabayasi Y."/>
            <person name="Sawada M."/>
            <person name="Horikawa H."/>
            <person name="Haikawa Y."/>
            <person name="Hino Y."/>
            <person name="Yamamoto S."/>
            <person name="Sekine M."/>
            <person name="Baba S."/>
            <person name="Kosugi H."/>
            <person name="Hosoyama A."/>
            <person name="Nagai Y."/>
            <person name="Sakai M."/>
            <person name="Ogura K."/>
            <person name="Otsuka R."/>
            <person name="Nakazawa H."/>
            <person name="Takamiya M."/>
            <person name="Ohfuku Y."/>
            <person name="Funahashi T."/>
            <person name="Tanaka T."/>
            <person name="Kudoh Y."/>
            <person name="Yamazaki J."/>
            <person name="Kushida N."/>
            <person name="Oguchi A."/>
            <person name="Aoki K."/>
            <person name="Yoshizawa T."/>
            <person name="Nakamura Y."/>
            <person name="Robb F.T."/>
            <person name="Horikoshi K."/>
            <person name="Masuchi Y."/>
            <person name="Shizuya H."/>
            <person name="Kikuchi H."/>
        </authorList>
    </citation>
    <scope>NUCLEOTIDE SEQUENCE [LARGE SCALE GENOMIC DNA]</scope>
    <source>
        <strain>ATCC 700860 / DSM 12428 / JCM 9974 / NBRC 100139 / OT-3</strain>
    </source>
</reference>
<reference evidence="10" key="2">
    <citation type="journal article" date="2005" name="J. Biol. Chem.">
        <title>Crystal structure of the NAD biosynthetic enzyme quinolinate synthase.</title>
        <authorList>
            <person name="Sakuraba H."/>
            <person name="Tsuge H."/>
            <person name="Yoneda K."/>
            <person name="Katunuma N."/>
            <person name="Ohshima T."/>
        </authorList>
    </citation>
    <scope>X-RAY CRYSTALLOGRAPHY (2.0 ANGSTROMS) IN COMPLEX WITH SUBSTRATE ANALOG</scope>
    <scope>FUNCTION</scope>
    <scope>CATALYTIC ACTIVITY</scope>
    <scope>REACTION MECHANISM</scope>
    <scope>PATHWAY</scope>
    <scope>SUBUNIT</scope>
</reference>
<reference evidence="11" key="3">
    <citation type="journal article" date="2016" name="J. Am. Chem. Soc.">
        <title>Structure of quinolinate synthase from Pyrococcus horikoshii in the presence of its product, quinolinic acid.</title>
        <authorList>
            <person name="Esakova O.A."/>
            <person name="Silakov A."/>
            <person name="Grove T.L."/>
            <person name="Saunders A.H."/>
            <person name="McLaughlin M.I."/>
            <person name="Yennawar N.H."/>
            <person name="Booker S.J."/>
        </authorList>
    </citation>
    <scope>X-RAY CRYSTALLOGRAPHY (1.90 ANGSTROMS) IN COMPLEX WITH IRON-SULFUR (4FE-4S) AND QUINOLINIC ACID</scope>
    <scope>FUNCTION</scope>
    <scope>CATALYTIC ACTIVITY</scope>
    <scope>COFACTOR</scope>
    <scope>BIOPHYSICOCHEMICAL PROPERTIES</scope>
    <scope>SUBUNIT</scope>
    <scope>MUTAGENESIS OF TYR-23; TYR-109; ASN-111 AND GLU-198</scope>
</reference>
<reference evidence="12 13 14 15 16 17 18" key="4">
    <citation type="journal article" date="2016" name="Biochemistry">
        <title>Crystal structures of the iron-sulfur cluster-dependent quinolinate synthase in complex with dihydroxyacetone phosphate, iminoaspartate analogues, and quinolinate.</title>
        <authorList>
            <person name="Fenwick M.K."/>
            <person name="Ealick S.E."/>
        </authorList>
    </citation>
    <scope>X-RAY CRYSTALLOGRAPHY (1.34 ANGSTROMS) IN COMPLEXES WITH IRON-SULFUR (4FE-4S); SUBSTRATE ANALOGS; DIHYDROXYACETONE PHOSPHATE AND QUINOLINATE</scope>
    <scope>COFACTOR</scope>
    <scope>DOMAIN</scope>
</reference>
<reference evidence="19 20 21 22" key="5">
    <citation type="journal article" date="2019" name="J. Am. Chem. Soc.">
        <title>An unexpected species determined by X-ray crystallography that may represent an intermediate in the reaction catalyzed by quinolinate synthase.</title>
        <authorList>
            <person name="Esakova O.A."/>
            <person name="Silakov A."/>
            <person name="Grove T.L."/>
            <person name="Warui D.M."/>
            <person name="Yennawar N.H."/>
            <person name="Booker S.J."/>
        </authorList>
    </citation>
    <scope>X-RAY CRYSTALLOGRAPHY (1.60 ANGSTROMS) OF WILD-TYPE IN COMPLEXES WITH IRON-SULFUR (4FE-4S); IMINOSUCCINATE; DIHYDROXYACETONE PHOSPHATE AND REACTION INTERMEDIATE AND OF MUTANT GLN-198 IN COMPLEX WITH IRON-SULFUR (4FE-4S) AND REACTION INTERMEDIATE</scope>
    <scope>REACTION MECHANISM</scope>
    <scope>COFACTOR</scope>
</reference>
<accession>O57767</accession>
<protein>
    <recommendedName>
        <fullName evidence="1 6">Quinolinate synthase</fullName>
        <shortName evidence="6">QS</shortName>
        <ecNumber evidence="1 2 3">2.5.1.72</ecNumber>
    </recommendedName>
</protein>
<gene>
    <name evidence="1 6" type="primary">nadA</name>
    <name type="ordered locus">PH0013</name>
</gene>
<proteinExistence type="evidence at protein level"/>
<keyword id="KW-0002">3D-structure</keyword>
<keyword id="KW-0004">4Fe-4S</keyword>
<keyword id="KW-0963">Cytoplasm</keyword>
<keyword id="KW-0408">Iron</keyword>
<keyword id="KW-0411">Iron-sulfur</keyword>
<keyword id="KW-0479">Metal-binding</keyword>
<keyword id="KW-0662">Pyridine nucleotide biosynthesis</keyword>
<keyword id="KW-0808">Transferase</keyword>